<keyword id="KW-0004">4Fe-4S</keyword>
<keyword id="KW-0067">ATP-binding</keyword>
<keyword id="KW-0149">Chlorophyll biosynthesis</keyword>
<keyword id="KW-0150">Chloroplast</keyword>
<keyword id="KW-0408">Iron</keyword>
<keyword id="KW-0411">Iron-sulfur</keyword>
<keyword id="KW-0479">Metal-binding</keyword>
<keyword id="KW-0547">Nucleotide-binding</keyword>
<keyword id="KW-0560">Oxidoreductase</keyword>
<keyword id="KW-0602">Photosynthesis</keyword>
<keyword id="KW-0934">Plastid</keyword>
<proteinExistence type="inferred from homology"/>
<reference key="1">
    <citation type="journal article" date="1988" name="J. Mol. Biol.">
        <title>Structure and organization of Marchantia polymorpha chloroplast genome. II. Gene organization of the large single copy region from rps'12 to atpB.</title>
        <authorList>
            <person name="Umesono K."/>
            <person name="Inokuchi H."/>
            <person name="Shiki Y."/>
            <person name="Takeuchi M."/>
            <person name="Chang Z."/>
            <person name="Fukuzawa H."/>
            <person name="Kohchi T."/>
            <person name="Shirai H."/>
            <person name="Ohyama K."/>
            <person name="Ozeki H."/>
        </authorList>
    </citation>
    <scope>NUCLEOTIDE SEQUENCE [GENOMIC DNA]</scope>
</reference>
<reference key="2">
    <citation type="journal article" date="1986" name="Nature">
        <title>Chloroplast gene organization deduced from complete sequence of liverwort Marchantia polymorpha chloroplast DNA.</title>
        <authorList>
            <person name="Ohyama K."/>
            <person name="Fukuzawa H."/>
            <person name="Kohchi T."/>
            <person name="Shirai H."/>
            <person name="Sano T."/>
            <person name="Sano S."/>
            <person name="Umesono K."/>
            <person name="Shiki Y."/>
            <person name="Takeuchi M."/>
            <person name="Chang Z."/>
            <person name="Aota S."/>
            <person name="Inokuchi H."/>
            <person name="Ozeki H."/>
        </authorList>
    </citation>
    <scope>NUCLEOTIDE SEQUENCE [LARGE SCALE GENOMIC DNA]</scope>
</reference>
<gene>
    <name evidence="1" type="primary">chlB</name>
</gene>
<name>CHLB_MARPO</name>
<organism>
    <name type="scientific">Marchantia polymorpha</name>
    <name type="common">Common liverwort</name>
    <name type="synonym">Marchantia aquatica</name>
    <dbReference type="NCBI Taxonomy" id="3197"/>
    <lineage>
        <taxon>Eukaryota</taxon>
        <taxon>Viridiplantae</taxon>
        <taxon>Streptophyta</taxon>
        <taxon>Embryophyta</taxon>
        <taxon>Marchantiophyta</taxon>
        <taxon>Marchantiopsida</taxon>
        <taxon>Marchantiidae</taxon>
        <taxon>Marchantiales</taxon>
        <taxon>Marchantiaceae</taxon>
        <taxon>Marchantia</taxon>
    </lineage>
</organism>
<comment type="function">
    <text evidence="1">Component of the dark-operative protochlorophyllide reductase (DPOR) that uses Mg-ATP and reduced ferredoxin to reduce ring D of protochlorophyllide (Pchlide) to form chlorophyllide a (Chlide). This reaction is light-independent. The NB-protein (ChlN-ChlB) is the catalytic component of the complex.</text>
</comment>
<comment type="catalytic activity">
    <reaction evidence="1">
        <text>chlorophyllide a + oxidized 2[4Fe-4S]-[ferredoxin] + 2 ADP + 2 phosphate = protochlorophyllide a + reduced 2[4Fe-4S]-[ferredoxin] + 2 ATP + 2 H2O</text>
        <dbReference type="Rhea" id="RHEA:28202"/>
        <dbReference type="Rhea" id="RHEA-COMP:10002"/>
        <dbReference type="Rhea" id="RHEA-COMP:10004"/>
        <dbReference type="ChEBI" id="CHEBI:15377"/>
        <dbReference type="ChEBI" id="CHEBI:30616"/>
        <dbReference type="ChEBI" id="CHEBI:33722"/>
        <dbReference type="ChEBI" id="CHEBI:33723"/>
        <dbReference type="ChEBI" id="CHEBI:43474"/>
        <dbReference type="ChEBI" id="CHEBI:83348"/>
        <dbReference type="ChEBI" id="CHEBI:83350"/>
        <dbReference type="ChEBI" id="CHEBI:456216"/>
        <dbReference type="EC" id="1.3.7.7"/>
    </reaction>
</comment>
<comment type="cofactor">
    <cofactor evidence="1">
        <name>[4Fe-4S] cluster</name>
        <dbReference type="ChEBI" id="CHEBI:49883"/>
    </cofactor>
    <text evidence="1">Binds 1 [4Fe-4S] cluster per heterodimer. The cluster is bound at the heterodimer interface by residues from both subunits.</text>
</comment>
<comment type="pathway">
    <text evidence="1">Porphyrin-containing compound metabolism; chlorophyll biosynthesis (light-independent).</text>
</comment>
<comment type="subunit">
    <text evidence="1">Protochlorophyllide reductase is composed of three subunits; ChlL, ChlN and ChlB. Forms a heterotetramer of two ChlB and two ChlN subunits.</text>
</comment>
<comment type="subcellular location">
    <subcellularLocation>
        <location>Plastid</location>
        <location>Chloroplast</location>
    </subcellularLocation>
</comment>
<comment type="similarity">
    <text evidence="1">Belongs to the ChlB/BchB/BchZ family.</text>
</comment>
<evidence type="ECO:0000255" key="1">
    <source>
        <dbReference type="HAMAP-Rule" id="MF_00353"/>
    </source>
</evidence>
<accession>P26238</accession>
<geneLocation type="chloroplast"/>
<feature type="chain" id="PRO_0000219829" description="Light-independent protochlorophyllide reductase subunit B">
    <location>
        <begin position="1"/>
        <end position="513"/>
    </location>
</feature>
<feature type="active site" description="Proton donor" evidence="1">
    <location>
        <position position="299"/>
    </location>
</feature>
<feature type="binding site" evidence="1">
    <location>
        <position position="36"/>
    </location>
    <ligand>
        <name>[4Fe-4S] cluster</name>
        <dbReference type="ChEBI" id="CHEBI:49883"/>
        <note>ligand shared with heterodimeric partner</note>
    </ligand>
</feature>
<feature type="binding site" evidence="1">
    <location>
        <begin position="434"/>
        <end position="435"/>
    </location>
    <ligand>
        <name>substrate</name>
    </ligand>
</feature>
<sequence length="513" mass="58328">MKLAYWMYAGPAHIGTLRVASSFKNVHAIMHAPLGDDYFNVMRSMLERERDFTPVTASIVDRHVLARGSQEKVVDNITKKDKQEHPDLIVLTPTCTSSILQEDLQNFVNRASMSSDSDVILADVNHYRVNELQAADRTLEQVVRYYLEKAHRQEKLNLSLTDKPSANIIGIFTLGFHNQHDCRELKRLLQDLGIMINQIIPEGGFVENLHELPKAWFNLVPYREVGLMTALYLEKEFGMPYISTTPMGIVDIANCIRQIQKQVNIWSPILLGKKFDFEPYIDEQTRFISQAAWFSRSIDCQNLTGKKAVVFGDATHAASITKILACEMGIRVSCTGTYCKHDEEWFREQVQNFCDEILITDDHTEVGDMIARIEPSAIFGTQMERHIGKRLDIPCGVISSPVHIQNFPLGYRPFLGYEGTNQIADLVYNSFTLGMEDHLLEIFGGHDTKEVITKSLSTDTDLTWNSESQLELNKIPGFVRGKIKRNTEKFARQNNITKITVEVMYAAKEDLSA</sequence>
<protein>
    <recommendedName>
        <fullName evidence="1">Light-independent protochlorophyllide reductase subunit B</fullName>
        <shortName evidence="1">DPOR subunit B</shortName>
        <shortName evidence="1">LI-POR subunit B</shortName>
        <ecNumber evidence="1">1.3.7.7</ecNumber>
    </recommendedName>
</protein>
<dbReference type="EC" id="1.3.7.7" evidence="1"/>
<dbReference type="EMBL" id="X04465">
    <property type="protein sequence ID" value="CAA28074.1"/>
    <property type="molecule type" value="Genomic_DNA"/>
</dbReference>
<dbReference type="PIR" id="S01586">
    <property type="entry name" value="A05029"/>
</dbReference>
<dbReference type="RefSeq" id="NP_039288.1">
    <property type="nucleotide sequence ID" value="NC_001319.1"/>
</dbReference>
<dbReference type="SMR" id="P26238"/>
<dbReference type="GeneID" id="2702591"/>
<dbReference type="UniPathway" id="UPA00670"/>
<dbReference type="GO" id="GO:0009507">
    <property type="term" value="C:chloroplast"/>
    <property type="evidence" value="ECO:0007669"/>
    <property type="project" value="UniProtKB-SubCell"/>
</dbReference>
<dbReference type="GO" id="GO:0051539">
    <property type="term" value="F:4 iron, 4 sulfur cluster binding"/>
    <property type="evidence" value="ECO:0007669"/>
    <property type="project" value="UniProtKB-UniRule"/>
</dbReference>
<dbReference type="GO" id="GO:0005524">
    <property type="term" value="F:ATP binding"/>
    <property type="evidence" value="ECO:0007669"/>
    <property type="project" value="UniProtKB-UniRule"/>
</dbReference>
<dbReference type="GO" id="GO:0046872">
    <property type="term" value="F:metal ion binding"/>
    <property type="evidence" value="ECO:0007669"/>
    <property type="project" value="UniProtKB-KW"/>
</dbReference>
<dbReference type="GO" id="GO:0016730">
    <property type="term" value="F:oxidoreductase activity, acting on iron-sulfur proteins as donors"/>
    <property type="evidence" value="ECO:0007669"/>
    <property type="project" value="InterPro"/>
</dbReference>
<dbReference type="GO" id="GO:0016636">
    <property type="term" value="F:oxidoreductase activity, acting on the CH-CH group of donors, iron-sulfur protein as acceptor"/>
    <property type="evidence" value="ECO:0007669"/>
    <property type="project" value="UniProtKB-UniRule"/>
</dbReference>
<dbReference type="GO" id="GO:0036068">
    <property type="term" value="P:light-independent chlorophyll biosynthetic process"/>
    <property type="evidence" value="ECO:0007669"/>
    <property type="project" value="UniProtKB-UniRule"/>
</dbReference>
<dbReference type="GO" id="GO:0019685">
    <property type="term" value="P:photosynthesis, dark reaction"/>
    <property type="evidence" value="ECO:0007669"/>
    <property type="project" value="InterPro"/>
</dbReference>
<dbReference type="CDD" id="cd01981">
    <property type="entry name" value="Pchlide_reductase_B"/>
    <property type="match status" value="1"/>
</dbReference>
<dbReference type="Gene3D" id="1.20.89.20">
    <property type="match status" value="1"/>
</dbReference>
<dbReference type="Gene3D" id="3.40.50.1980">
    <property type="entry name" value="Nitrogenase molybdenum iron protein domain"/>
    <property type="match status" value="3"/>
</dbReference>
<dbReference type="Gene3D" id="1.10.8.550">
    <property type="entry name" value="Proto-chlorophyllide reductase 57 kD subunit B"/>
    <property type="match status" value="1"/>
</dbReference>
<dbReference type="HAMAP" id="MF_00353">
    <property type="entry name" value="ChlB_BchB"/>
    <property type="match status" value="1"/>
</dbReference>
<dbReference type="InterPro" id="IPR050152">
    <property type="entry name" value="ChlB/BchB/BchZ"/>
</dbReference>
<dbReference type="InterPro" id="IPR013580">
    <property type="entry name" value="LI-POR_suB-like_C"/>
</dbReference>
<dbReference type="InterPro" id="IPR000510">
    <property type="entry name" value="Nase/OxRdtase_comp1"/>
</dbReference>
<dbReference type="InterPro" id="IPR042298">
    <property type="entry name" value="P-CP_red_C"/>
</dbReference>
<dbReference type="InterPro" id="IPR005969">
    <property type="entry name" value="Protochl_reductB"/>
</dbReference>
<dbReference type="InterPro" id="IPR016209">
    <property type="entry name" value="Protochlorophyllide_Rdtase"/>
</dbReference>
<dbReference type="NCBIfam" id="TIGR01278">
    <property type="entry name" value="DPOR_BchB"/>
    <property type="match status" value="1"/>
</dbReference>
<dbReference type="PANTHER" id="PTHR33712">
    <property type="entry name" value="LIGHT-INDEPENDENT PROTOCHLOROPHYLLIDE REDUCTASE SUBUNIT B"/>
    <property type="match status" value="1"/>
</dbReference>
<dbReference type="PANTHER" id="PTHR33712:SF7">
    <property type="entry name" value="LIGHT-INDEPENDENT PROTOCHLOROPHYLLIDE REDUCTASE SUBUNIT B"/>
    <property type="match status" value="1"/>
</dbReference>
<dbReference type="Pfam" id="PF00148">
    <property type="entry name" value="Oxidored_nitro"/>
    <property type="match status" value="1"/>
</dbReference>
<dbReference type="Pfam" id="PF08369">
    <property type="entry name" value="PCP_red"/>
    <property type="match status" value="1"/>
</dbReference>
<dbReference type="PIRSF" id="PIRSF000163">
    <property type="entry name" value="PCP_ChlB"/>
    <property type="match status" value="1"/>
</dbReference>
<dbReference type="SUPFAM" id="SSF53807">
    <property type="entry name" value="Helical backbone' metal receptor"/>
    <property type="match status" value="1"/>
</dbReference>